<proteinExistence type="inferred from homology"/>
<reference key="1">
    <citation type="journal article" date="2011" name="Proc. Natl. Acad. Sci. U.S.A.">
        <title>Genomic anatomy of Escherichia coli O157:H7 outbreaks.</title>
        <authorList>
            <person name="Eppinger M."/>
            <person name="Mammel M.K."/>
            <person name="Leclerc J.E."/>
            <person name="Ravel J."/>
            <person name="Cebula T.A."/>
        </authorList>
    </citation>
    <scope>NUCLEOTIDE SEQUENCE [LARGE SCALE GENOMIC DNA]</scope>
    <source>
        <strain>EC4115 / EHEC</strain>
    </source>
</reference>
<keyword id="KW-0687">Ribonucleoprotein</keyword>
<keyword id="KW-0689">Ribosomal protein</keyword>
<gene>
    <name evidence="1" type="primary">rpmF</name>
    <name type="ordered locus">ECH74115_1468</name>
</gene>
<comment type="similarity">
    <text evidence="1">Belongs to the bacterial ribosomal protein bL32 family.</text>
</comment>
<protein>
    <recommendedName>
        <fullName evidence="1">Large ribosomal subunit protein bL32</fullName>
    </recommendedName>
    <alternativeName>
        <fullName evidence="3">50S ribosomal protein L32</fullName>
    </alternativeName>
</protein>
<name>RL32_ECO5E</name>
<feature type="chain" id="PRO_1000120117" description="Large ribosomal subunit protein bL32">
    <location>
        <begin position="1"/>
        <end position="57"/>
    </location>
</feature>
<feature type="region of interest" description="Disordered" evidence="2">
    <location>
        <begin position="1"/>
        <end position="38"/>
    </location>
</feature>
<dbReference type="EMBL" id="CP001164">
    <property type="protein sequence ID" value="ACI36826.1"/>
    <property type="molecule type" value="Genomic_DNA"/>
</dbReference>
<dbReference type="RefSeq" id="WP_000290727.1">
    <property type="nucleotide sequence ID" value="NC_011353.1"/>
</dbReference>
<dbReference type="SMR" id="B5YVV7"/>
<dbReference type="GeneID" id="93776319"/>
<dbReference type="KEGG" id="ecf:ECH74115_1468"/>
<dbReference type="HOGENOM" id="CLU_129084_2_1_6"/>
<dbReference type="GO" id="GO:0015934">
    <property type="term" value="C:large ribosomal subunit"/>
    <property type="evidence" value="ECO:0007669"/>
    <property type="project" value="InterPro"/>
</dbReference>
<dbReference type="GO" id="GO:0003735">
    <property type="term" value="F:structural constituent of ribosome"/>
    <property type="evidence" value="ECO:0007669"/>
    <property type="project" value="InterPro"/>
</dbReference>
<dbReference type="GO" id="GO:0006412">
    <property type="term" value="P:translation"/>
    <property type="evidence" value="ECO:0007669"/>
    <property type="project" value="UniProtKB-UniRule"/>
</dbReference>
<dbReference type="HAMAP" id="MF_00340">
    <property type="entry name" value="Ribosomal_bL32"/>
    <property type="match status" value="1"/>
</dbReference>
<dbReference type="InterPro" id="IPR002677">
    <property type="entry name" value="Ribosomal_bL32"/>
</dbReference>
<dbReference type="InterPro" id="IPR044957">
    <property type="entry name" value="Ribosomal_bL32_bact"/>
</dbReference>
<dbReference type="InterPro" id="IPR011332">
    <property type="entry name" value="Ribosomal_zn-bd"/>
</dbReference>
<dbReference type="NCBIfam" id="TIGR01031">
    <property type="entry name" value="rpmF_bact"/>
    <property type="match status" value="1"/>
</dbReference>
<dbReference type="PANTHER" id="PTHR35534">
    <property type="entry name" value="50S RIBOSOMAL PROTEIN L32"/>
    <property type="match status" value="1"/>
</dbReference>
<dbReference type="PANTHER" id="PTHR35534:SF1">
    <property type="entry name" value="LARGE RIBOSOMAL SUBUNIT PROTEIN BL32"/>
    <property type="match status" value="1"/>
</dbReference>
<dbReference type="Pfam" id="PF01783">
    <property type="entry name" value="Ribosomal_L32p"/>
    <property type="match status" value="1"/>
</dbReference>
<dbReference type="SUPFAM" id="SSF57829">
    <property type="entry name" value="Zn-binding ribosomal proteins"/>
    <property type="match status" value="1"/>
</dbReference>
<evidence type="ECO:0000255" key="1">
    <source>
        <dbReference type="HAMAP-Rule" id="MF_00340"/>
    </source>
</evidence>
<evidence type="ECO:0000256" key="2">
    <source>
        <dbReference type="SAM" id="MobiDB-lite"/>
    </source>
</evidence>
<evidence type="ECO:0000305" key="3"/>
<organism>
    <name type="scientific">Escherichia coli O157:H7 (strain EC4115 / EHEC)</name>
    <dbReference type="NCBI Taxonomy" id="444450"/>
    <lineage>
        <taxon>Bacteria</taxon>
        <taxon>Pseudomonadati</taxon>
        <taxon>Pseudomonadota</taxon>
        <taxon>Gammaproteobacteria</taxon>
        <taxon>Enterobacterales</taxon>
        <taxon>Enterobacteriaceae</taxon>
        <taxon>Escherichia</taxon>
    </lineage>
</organism>
<sequence>MAVQQNKPTRSKRGMRRSHDALTAVTSLSVDKTSGEKHLRHHITADGYYRGRKVIAK</sequence>
<accession>B5YVV7</accession>